<sequence length="72" mass="8317">MKLTCVVIVVVLFLTACQLITADDSRRTQKHRALRSTTKLSLSTRCRIPNQKCFQHLDDCCSRKCNRFNKCV</sequence>
<name>O17A_CONPU</name>
<comment type="function">
    <text evidence="2 3 4 5 6 7">Kappa-conotoxins bind and inhibit voltage-gated potassium channels (Kv). This toxin inhibits the drosophila Shaker channel (IC(50)=57-80 nM) (PubMed:10818087, PubMed:12074021, PubMed:27093300). In vivo, when tested in fish, this toxin induces hyperactivity, followed by continuous contraction and extension of major fins, without immobilization or death (PubMed:12074021, PubMed:9417043). Injection of this peptide together with the delta-conotoxin PVIA causes the sudden tetanus of prey (STOP) syndrome, which is a single, lethal 'fin-pop' in envenomed fish (PubMed:12074021, PubMed:9417043). When tested in mice, induces hyperactivity (PubMed:9417043).</text>
</comment>
<comment type="subcellular location">
    <subcellularLocation>
        <location evidence="7">Secreted</location>
    </subcellularLocation>
</comment>
<comment type="tissue specificity">
    <text evidence="20">Expressed by the venom duct.</text>
</comment>
<comment type="domain">
    <text evidence="7 8 9">The presence of a 'disulfide through disulfide knot' structurally defines this protein as a knottin.</text>
</comment>
<comment type="domain">
    <text evidence="15">The cysteine framework is VI/VII (C-C-CC-C-C).</text>
</comment>
<comment type="PTM">
    <text evidence="7 8">This toxin is not amidated at the C-terminal Val residue.</text>
</comment>
<comment type="mass spectrometry" mass="3268.4" method="FAB" evidence="7">
    <text>Monoisotopic mass.</text>
</comment>
<comment type="pharmaceutical">
    <text evidence="18">Was tested under preclinical trial by Cognetix Inc under the name CGX-1051 as a cardioprotective agent.</text>
</comment>
<comment type="miscellaneous">
    <text evidence="6">A free N-terminal residue (not acetylated or not cyclizated) is necessary for optimal inhibition of Shaker potassium channel.</text>
</comment>
<comment type="miscellaneous">
    <text evidence="6 7">Negative results: has no effect on the rat Kv1.1/KCNA1 channel (PubMed:9417043). Does not inhibit Kv1.3/KCNA3, Kv1.6/KCNA6, Kv2.1/KCNB1, Nav1.4/SCN4A and Nav1.6/SCN8A (PubMed:27093300).</text>
</comment>
<comment type="similarity">
    <text evidence="15">Belongs to the conotoxin O1 superfamily.</text>
</comment>
<comment type="caution">
    <text evidence="15">Because analogs resulting of mutagenesis of Hyp-49, Asn-50, Leu-57 and Asp-59 give very low yields upon folding, the results of mutagenesis on these residues should be interpreted with caution.</text>
</comment>
<dbReference type="PIR" id="A58997">
    <property type="entry name" value="A58997"/>
</dbReference>
<dbReference type="PDB" id="1AV3">
    <property type="method" value="NMR"/>
    <property type="chains" value="A=46-72"/>
</dbReference>
<dbReference type="PDB" id="1KCP">
    <property type="method" value="NMR"/>
    <property type="chains" value="A=46-72"/>
</dbReference>
<dbReference type="PDB" id="2N8E">
    <property type="method" value="NMR"/>
    <property type="chains" value="A=46-72"/>
</dbReference>
<dbReference type="PDBsum" id="1AV3"/>
<dbReference type="PDBsum" id="1KCP"/>
<dbReference type="PDBsum" id="2N8E"/>
<dbReference type="BMRB" id="P56633"/>
<dbReference type="SMR" id="P56633"/>
<dbReference type="TCDB" id="8.B.4.1.15">
    <property type="family name" value="the conotoxin t (conotoxin t) family"/>
</dbReference>
<dbReference type="ConoServer" id="1331">
    <property type="toxin name" value="PVIIA precursor"/>
</dbReference>
<dbReference type="EvolutionaryTrace" id="P56633"/>
<dbReference type="GO" id="GO:0005576">
    <property type="term" value="C:extracellular region"/>
    <property type="evidence" value="ECO:0007669"/>
    <property type="project" value="UniProtKB-SubCell"/>
</dbReference>
<dbReference type="GO" id="GO:0008200">
    <property type="term" value="F:ion channel inhibitor activity"/>
    <property type="evidence" value="ECO:0007669"/>
    <property type="project" value="InterPro"/>
</dbReference>
<dbReference type="GO" id="GO:0015459">
    <property type="term" value="F:potassium channel regulator activity"/>
    <property type="evidence" value="ECO:0007669"/>
    <property type="project" value="UniProtKB-KW"/>
</dbReference>
<dbReference type="GO" id="GO:0090729">
    <property type="term" value="F:toxin activity"/>
    <property type="evidence" value="ECO:0007669"/>
    <property type="project" value="UniProtKB-KW"/>
</dbReference>
<dbReference type="InterPro" id="IPR004214">
    <property type="entry name" value="Conotoxin"/>
</dbReference>
<dbReference type="Pfam" id="PF02950">
    <property type="entry name" value="Conotoxin"/>
    <property type="match status" value="1"/>
</dbReference>
<dbReference type="SUPFAM" id="SSF57059">
    <property type="entry name" value="omega toxin-like"/>
    <property type="match status" value="1"/>
</dbReference>
<keyword id="KW-0002">3D-structure</keyword>
<keyword id="KW-0903">Direct protein sequencing</keyword>
<keyword id="KW-1015">Disulfide bond</keyword>
<keyword id="KW-0379">Hydroxylation</keyword>
<keyword id="KW-0872">Ion channel impairing toxin</keyword>
<keyword id="KW-0960">Knottin</keyword>
<keyword id="KW-0528">Neurotoxin</keyword>
<keyword id="KW-0582">Pharmaceutical</keyword>
<keyword id="KW-0632">Potassium channel impairing toxin</keyword>
<keyword id="KW-0964">Secreted</keyword>
<keyword id="KW-0732">Signal</keyword>
<keyword id="KW-0800">Toxin</keyword>
<keyword id="KW-1220">Voltage-gated potassium channel impairing toxin</keyword>
<evidence type="ECO:0000255" key="1"/>
<evidence type="ECO:0000269" key="2">
    <source>
    </source>
</evidence>
<evidence type="ECO:0000269" key="3">
    <source>
    </source>
</evidence>
<evidence type="ECO:0000269" key="4">
    <source>
    </source>
</evidence>
<evidence type="ECO:0000269" key="5">
    <source>
    </source>
</evidence>
<evidence type="ECO:0000269" key="6">
    <source>
    </source>
</evidence>
<evidence type="ECO:0000269" key="7">
    <source>
    </source>
</evidence>
<evidence type="ECO:0000269" key="8">
    <source>
    </source>
</evidence>
<evidence type="ECO:0000269" key="9">
    <source>
    </source>
</evidence>
<evidence type="ECO:0000303" key="10">
    <source>
    </source>
</evidence>
<evidence type="ECO:0000303" key="11">
    <source>
    </source>
</evidence>
<evidence type="ECO:0000303" key="12">
    <source>
    </source>
</evidence>
<evidence type="ECO:0000303" key="13">
    <source>
    </source>
</evidence>
<evidence type="ECO:0000303" key="14">
    <source>
    </source>
</evidence>
<evidence type="ECO:0000305" key="15"/>
<evidence type="ECO:0000305" key="16">
    <source>
    </source>
</evidence>
<evidence type="ECO:0000305" key="17">
    <source>
    </source>
</evidence>
<evidence type="ECO:0000305" key="18">
    <source>
    </source>
</evidence>
<evidence type="ECO:0000305" key="19">
    <source>
    </source>
</evidence>
<evidence type="ECO:0000305" key="20">
    <source>
    </source>
</evidence>
<evidence type="ECO:0000312" key="21">
    <source>
        <dbReference type="PDB" id="1AV3"/>
    </source>
</evidence>
<evidence type="ECO:0000312" key="22">
    <source>
        <dbReference type="PDB" id="1KCP"/>
    </source>
</evidence>
<evidence type="ECO:0000312" key="23">
    <source>
        <dbReference type="PDB" id="2N8E"/>
    </source>
</evidence>
<evidence type="ECO:0007829" key="24">
    <source>
        <dbReference type="PDB" id="1AV3"/>
    </source>
</evidence>
<feature type="signal peptide" evidence="1">
    <location>
        <begin position="1"/>
        <end position="22"/>
    </location>
</feature>
<feature type="propeptide" id="PRO_0000034981" evidence="5">
    <location>
        <begin position="23"/>
        <end position="45"/>
    </location>
</feature>
<feature type="peptide" id="PRO_0000034982" description="Kappa-conotoxin PVIIA" evidence="5">
    <location>
        <begin position="46"/>
        <end position="72"/>
    </location>
</feature>
<feature type="site" description="Inserts into the pore of the channel and blocks the flow of potassium ions" evidence="16 17 19">
    <location>
        <position position="52"/>
    </location>
</feature>
<feature type="modified residue" description="4-hydroxyproline" evidence="5">
    <location>
        <position position="49"/>
    </location>
</feature>
<feature type="disulfide bond" evidence="7 8 9 21 22 23">
    <location>
        <begin position="46"/>
        <end position="61"/>
    </location>
</feature>
<feature type="disulfide bond" evidence="7 8 9 21 22 23">
    <location>
        <begin position="53"/>
        <end position="65"/>
    </location>
</feature>
<feature type="disulfide bond" evidence="7 8 9 21 22 23">
    <location>
        <begin position="60"/>
        <end position="71"/>
    </location>
</feature>
<feature type="mutagenesis site" description="Loss of toxicity." evidence="3">
    <original>R</original>
    <variation>A</variation>
    <variation>K</variation>
    <variation>Q</variation>
    <location>
        <position position="47"/>
    </location>
</feature>
<feature type="mutagenesis site" description="3-fold decrease of toxicity." evidence="3">
    <original>I</original>
    <variation>A</variation>
    <location>
        <position position="48"/>
    </location>
</feature>
<feature type="mutagenesis site" description="Loss of toxicity." evidence="3">
    <original>P</original>
    <variation>A</variation>
    <location>
        <position position="49"/>
    </location>
</feature>
<feature type="mutagenesis site" description="Loss of toxicity." evidence="3">
    <original>N</original>
    <variation>A</variation>
    <location>
        <position position="50"/>
    </location>
</feature>
<feature type="mutagenesis site" description="13-fold decrease of toxicity." evidence="3">
    <original>Q</original>
    <variation>A</variation>
    <location>
        <position position="51"/>
    </location>
</feature>
<feature type="mutagenesis site" description="Loss of toxicity." evidence="3">
    <original>K</original>
    <variation>A</variation>
    <variation>R</variation>
    <location>
        <position position="52"/>
    </location>
</feature>
<feature type="mutagenesis site" description="Loss of toxicity." evidence="3">
    <original>F</original>
    <variation>A</variation>
    <variation>M</variation>
    <location>
        <position position="54"/>
    </location>
</feature>
<feature type="mutagenesis site" description="11-fold decrease of toxicity." evidence="3">
    <original>F</original>
    <variation>Y</variation>
    <location>
        <position position="54"/>
    </location>
</feature>
<feature type="mutagenesis site" description="3-fold decrease of toxicity." evidence="3">
    <original>Q</original>
    <variation>A</variation>
    <location>
        <position position="55"/>
    </location>
</feature>
<feature type="mutagenesis site" description="3-fold decrease of toxicity." evidence="3">
    <original>H</original>
    <variation>A</variation>
    <location>
        <position position="56"/>
    </location>
</feature>
<feature type="mutagenesis site" description="Loss of toxicity." evidence="3">
    <original>L</original>
    <variation>A</variation>
    <location>
        <position position="57"/>
    </location>
</feature>
<feature type="mutagenesis site" description="1.5-fold decrease of toxicity." evidence="3">
    <original>D</original>
    <variation>A</variation>
    <location>
        <position position="58"/>
    </location>
</feature>
<feature type="mutagenesis site" description="Loss of toxicity." evidence="3">
    <original>D</original>
    <variation>A</variation>
    <location>
        <position position="59"/>
    </location>
</feature>
<feature type="mutagenesis site" description="1.5-fold decrease of toxicity." evidence="3">
    <original>S</original>
    <variation>A</variation>
    <location>
        <position position="62"/>
    </location>
</feature>
<feature type="mutagenesis site" description="3.5-fold decrease of toxicity." evidence="3">
    <original>R</original>
    <variation>A</variation>
    <location>
        <position position="63"/>
    </location>
</feature>
<feature type="mutagenesis site" description="1.2-fold decrease of toxicity." evidence="3">
    <original>K</original>
    <variation>A</variation>
    <location>
        <position position="64"/>
    </location>
</feature>
<feature type="mutagenesis site" description="5-fold decrease of toxicity." evidence="3">
    <original>R</original>
    <variation>A</variation>
    <location>
        <position position="67"/>
    </location>
</feature>
<feature type="mutagenesis site" description="17-fold decrease of toxicity." evidence="3">
    <original>F</original>
    <variation>A</variation>
    <location>
        <position position="68"/>
    </location>
</feature>
<feature type="mutagenesis site" description="19-fold decrease of toxicity." evidence="3">
    <original>N</original>
    <variation>A</variation>
    <location>
        <position position="69"/>
    </location>
</feature>
<feature type="mutagenesis site" description="117-fold decrease of toxicity." evidence="3">
    <original>K</original>
    <variation>A</variation>
    <location>
        <position position="70"/>
    </location>
</feature>
<feature type="mutagenesis site" description="Cyclic-[GGG]PVIIA[LPET]; 10-fold decrease in ability to inhibit Shaker potassium channel, and decrease in serum stability." evidence="6">
    <original>V</original>
    <variation>VLPETGGG</variation>
    <location>
        <position position="72"/>
    </location>
</feature>
<feature type="helix" evidence="24">
    <location>
        <begin position="55"/>
        <end position="57"/>
    </location>
</feature>
<feature type="strand" evidence="24">
    <location>
        <begin position="60"/>
        <end position="62"/>
    </location>
</feature>
<feature type="strand" evidence="24">
    <location>
        <begin position="69"/>
        <end position="71"/>
    </location>
</feature>
<accession>P56633</accession>
<reference key="1">
    <citation type="journal article" date="1998" name="J. Biol. Chem.">
        <title>Kappa-conotoxin PVIIA is a peptide inhibiting the shaker K+ channel.</title>
        <authorList>
            <person name="Shon K.-J."/>
            <person name="Stocker M."/>
            <person name="Terlau H."/>
            <person name="Stuehmer W."/>
            <person name="Jacobsen R.B."/>
            <person name="Walker C.S."/>
            <person name="Grilley M.M."/>
            <person name="Watkins M."/>
            <person name="Hillyard D.R."/>
            <person name="Gray W.R."/>
            <person name="Olivera B.M."/>
        </authorList>
    </citation>
    <scope>NUCLEOTIDE SEQUENCE [MRNA]</scope>
    <scope>SYNTHESIS OF 46-72</scope>
    <scope>FUNCTION</scope>
    <scope>MASS SPECTROMETRY</scope>
    <scope>DISULFIDE BOND</scope>
    <scope>SUBCELLULAR LOCATION</scope>
    <scope>BIOASSAY</scope>
    <source>
        <tissue>Venom</tissue>
        <tissue>Venom duct</tissue>
    </source>
</reference>
<reference key="2">
    <citation type="journal article" date="1996" name="Nature">
        <title>Strategy for rapid immobilization of prey by a fish-hunting marine snail.</title>
        <authorList>
            <person name="Terlau H."/>
            <person name="Shon K.-J."/>
            <person name="Grilley M.M."/>
            <person name="Stocker M."/>
            <person name="Stuehmer W."/>
            <person name="Olivera B.M."/>
        </authorList>
    </citation>
    <scope>PROTEIN SEQUENCE OF 46-72</scope>
    <scope>FUNCTION</scope>
    <scope>HYDROXYLATION AT PRO-49</scope>
    <scope>SYNTHESIS OF 46-72</scope>
    <scope>BIOASSAY</scope>
</reference>
<reference key="3">
    <citation type="journal article" date="1999" name="J. Gen. Physiol.">
        <title>The block of Shaker K+ channels by kappa-conotoxin PVIIA is state dependent.</title>
        <authorList>
            <person name="Terlau H."/>
            <person name="Boccaccio A."/>
            <person name="Olivera B.M."/>
            <person name="Conti F."/>
        </authorList>
    </citation>
    <scope>FUNCTION</scope>
</reference>
<reference key="4">
    <citation type="journal article" date="2000" name="J. Biol. Chem.">
        <title>Single amino acid substitutions in kappa-conotoxin PVIIA disrupt interaction with the shaker K+ channel.</title>
        <authorList>
            <person name="Jacobsen R.B."/>
            <person name="Koch E.D."/>
            <person name="Lange-Malecki B."/>
            <person name="Stocker M."/>
            <person name="Verhey J."/>
            <person name="Van Wagoner R.M."/>
            <person name="Vyazovkina A."/>
            <person name="Olivera B.M."/>
            <person name="Terlau H."/>
        </authorList>
    </citation>
    <scope>MUTAGENESIS OF ARG-47; ILE-48; PRO-49; ASN-50; GLN-51; LYS-52; PHE-54; PHE-54; GLN-55; HIS-56; LEU-57; ASP-58; ASP-59; SER-62; ARG-63; LYS-64; ARG-67; PHE-68; ASN-69 AND LYS-70</scope>
</reference>
<reference key="5">
    <citation type="journal article" date="2001" name="Eur. Biophys. J.">
        <title>Molecular simulation of the interaction of kappa-conotoxin-PVIIA with the Shaker potassium channel pore.</title>
        <authorList>
            <person name="Moran O."/>
        </authorList>
    </citation>
    <scope>3D-STRUCTURE MODELING OF THE SHAKER-PVIIA INTERACTION</scope>
</reference>
<reference key="6">
    <citation type="journal article" date="2002" name="Biophys. J.">
        <title>Inhibition of single Shaker K channels by kappa-conotoxin-PVIIA.</title>
        <authorList>
            <person name="Naranjo D."/>
        </authorList>
    </citation>
    <scope>FUNCTION</scope>
</reference>
<reference key="7">
    <citation type="journal article" date="2005" name="J. Am. Chem. Soc.">
        <title>Electrostatic recognition and induced fit in the kappa-PVIIA toxin binding to Shaker potassium channel.</title>
        <authorList>
            <person name="Huang X."/>
            <person name="Dong F."/>
            <person name="Zhou H.X."/>
        </authorList>
    </citation>
    <scope>FUNCTION</scope>
    <scope>MOLECULAR DYNAMICS SIMULATIONS</scope>
</reference>
<reference key="8">
    <citation type="journal article" date="2005" name="J. Cardiovasc. Pharmacol.">
        <title>Postischemic administration of CGX-1051, a peptide from cone snail venom, reduces infarct size in both rat and dog models of myocardial ischemia and reperfusion.</title>
        <authorList>
            <person name="Lubbers N.L."/>
            <person name="Campbell T.J."/>
            <person name="Polakowski J.S."/>
            <person name="Bulaj G."/>
            <person name="Layer R.T."/>
            <person name="Moore J."/>
            <person name="Gross G.J."/>
            <person name="Cox B.F."/>
        </authorList>
    </citation>
    <scope>PHARMACEUTICAL</scope>
</reference>
<reference key="9">
    <citation type="journal article" date="2013" name="Biochemistry">
        <title>Why the Drosophila Shaker K+ channel is not a good model for ligand binding to voltage-gated Kv1 channels.</title>
        <authorList>
            <person name="Mahdavi S."/>
            <person name="Kuyucak S."/>
        </authorList>
    </citation>
    <scope>FUNCTION</scope>
    <scope>MOLECULAR DYNAMICS SIMULATIONS</scope>
</reference>
<reference key="10">
    <citation type="journal article" date="2016" name="Biotechnol. Bioeng.">
        <title>Efficient enzymatic cyclization of an inhibitory cystine knot-containing peptide.</title>
        <authorList>
            <person name="Kwon S."/>
            <person name="Bosmans F."/>
            <person name="Kaas Q."/>
            <person name="Cheneval O."/>
            <person name="Conibear A.C."/>
            <person name="Rosengren K.J."/>
            <person name="Wang C.K."/>
            <person name="Schroeder C.I."/>
            <person name="Craik D.J."/>
        </authorList>
    </citation>
    <scope>STRUCTURE BY NMR OF SYNTHETIC CYCLIC PVIIA</scope>
    <scope>FUNCTION</scope>
    <scope>MUTAGENESIS OF VAL-72</scope>
</reference>
<reference key="11">
    <citation type="journal article" date="1997" name="Structure">
        <title>Solution structure and proposed binding mechanism of a novel potassium channel toxin kappa-conotoxin PVIIA.</title>
        <authorList>
            <person name="Scanlon M.J."/>
            <person name="Naranjo D."/>
            <person name="Thomas L."/>
            <person name="Alewood P.F."/>
            <person name="Lewis R.J."/>
            <person name="Craik D.J."/>
        </authorList>
    </citation>
    <scope>STRUCTURE BY NMR OF 46-72</scope>
    <scope>DISULFIDE BONDS</scope>
    <scope>SYNTHESIS OF 46-72</scope>
    <source>
        <tissue>Venom</tissue>
    </source>
</reference>
<reference key="12">
    <citation type="journal article" date="1998" name="Biochemistry">
        <title>Three-dimensional structure of kappa-conotoxin PVIIA, a novel potassium channel-blocking toxin from cone snails.</title>
        <authorList>
            <person name="Savarin P."/>
            <person name="Guenneugues M."/>
            <person name="Gilquin B."/>
            <person name="Lamthanh H."/>
            <person name="Gasparini S."/>
            <person name="Zinn-Justin S."/>
            <person name="Menez A."/>
        </authorList>
    </citation>
    <scope>STRUCTURE BY NMR OF 46-72</scope>
    <scope>DISULFIDE BONDS</scope>
    <scope>SYNTHESIS OF 46-72</scope>
</reference>
<organism>
    <name type="scientific">Conus purpurascens</name>
    <name type="common">Purple cone</name>
    <dbReference type="NCBI Taxonomy" id="41690"/>
    <lineage>
        <taxon>Eukaryota</taxon>
        <taxon>Metazoa</taxon>
        <taxon>Spiralia</taxon>
        <taxon>Lophotrochozoa</taxon>
        <taxon>Mollusca</taxon>
        <taxon>Gastropoda</taxon>
        <taxon>Caenogastropoda</taxon>
        <taxon>Neogastropoda</taxon>
        <taxon>Conoidea</taxon>
        <taxon>Conidae</taxon>
        <taxon>Conus</taxon>
        <taxon>Chelyconus</taxon>
    </lineage>
</organism>
<proteinExistence type="evidence at protein level"/>
<protein>
    <recommendedName>
        <fullName evidence="10 12 13 14">Kappa-conotoxin PVIIA</fullName>
    </recommendedName>
    <alternativeName>
        <fullName evidence="11">CGX-1051</fullName>
    </alternativeName>
    <alternativeName>
        <fullName evidence="10 12">Fin-popping peptide</fullName>
    </alternativeName>
</protein>